<sequence length="773" mass="85991">MAECGASGSGSSGDSLDKSITLPPDEIFRNLENAKRFAIDIGGSLTKLAYYSTVQHKVAKVRSFDHSGKDTEREHEPPYEISVQEEITARLHFIKFENTYIEACLDFIKDHLVNTETKVIQATGGGAYKFKDLIEEKLRLKVDKEDVMTCLIKGCNFVLKNIPHEAFVYQKDSDPEFRFQTNHPHIFPYLLVNIGSGVSIVKVETEDRFEWVGGSSIGGGTFWGLGALLTKTKKFDELLHLASRGQHSNVDMLVRDVYGGAHQTLGLSGNLIASSFGKSATADQEFSKEDMAKSLLHMISNDIGQLACLHARLHSLDRVYFGGFFIRGHPVTMRTITYSINFFSKGEVQALFLRHEGYLGAIGAFLKGAEQDNPNQYSWGENYAGSSGLMSASPELGPAQRARSGTFDLLEMDRLERPLVDLPLLLDPPSYVPDTVDLTDDALARKYWLTCFEEALDGVVKRAVASQPDSVDAAERAEKFRQKYWNKLQTLRQQPFAYGTLTVRSLLDTREHCLNEFNFPDPYSKVKQRENGVALRCFPGVVRSLDALGWEERQLALVKGLLAGNVFDWGAKAVSAVLESDPYFGFEEAKRKLQERPWLVDSYSEWLQRLKGPPHKCALIFADNSGIDIILGVFPFVRELLLRGTEVILACNSGPALNDVTHSESLIVAERIAGMDPVVHSALQEERLLLVQTGSSSPCLDLSRLDKGLAALVRERGADLVVIEGMGRAVHTNYHAALRCESLKLAVIKNAWLAERLGGRLFSVIFKYEVPAE</sequence>
<evidence type="ECO:0000250" key="1"/>
<evidence type="ECO:0000250" key="2">
    <source>
        <dbReference type="UniProtKB" id="Q04371"/>
    </source>
</evidence>
<evidence type="ECO:0000250" key="3">
    <source>
        <dbReference type="UniProtKB" id="Q80YV4"/>
    </source>
</evidence>
<evidence type="ECO:0000250" key="4">
    <source>
        <dbReference type="UniProtKB" id="Q923S8"/>
    </source>
</evidence>
<evidence type="ECO:0000269" key="5">
    <source>
    </source>
</evidence>
<evidence type="ECO:0000269" key="6">
    <source>
    </source>
</evidence>
<evidence type="ECO:0000269" key="7">
    <source>
    </source>
</evidence>
<evidence type="ECO:0000269" key="8">
    <source>
    </source>
</evidence>
<evidence type="ECO:0000269" key="9">
    <source>
    </source>
</evidence>
<evidence type="ECO:0000269" key="10">
    <source>
    </source>
</evidence>
<evidence type="ECO:0000269" key="11">
    <source ref="2"/>
</evidence>
<evidence type="ECO:0000303" key="12">
    <source>
    </source>
</evidence>
<evidence type="ECO:0000303" key="13">
    <source>
    </source>
</evidence>
<evidence type="ECO:0000305" key="14"/>
<evidence type="ECO:0000305" key="15">
    <source>
    </source>
</evidence>
<evidence type="ECO:0000312" key="16">
    <source>
        <dbReference type="HGNC" id="HGNC:19366"/>
    </source>
</evidence>
<evidence type="ECO:0007744" key="17">
    <source>
    </source>
</evidence>
<evidence type="ECO:0007744" key="18">
    <source>
    </source>
</evidence>
<proteinExistence type="evidence at protein level"/>
<feature type="initiator methionine" description="Removed" evidence="17">
    <location>
        <position position="1"/>
    </location>
</feature>
<feature type="chain" id="PRO_0000161806" description="4'-phosphopantetheine phosphatase">
    <location>
        <begin position="2"/>
        <end position="773"/>
    </location>
</feature>
<feature type="region of interest" description="Pantothenate kinase" evidence="15">
    <location>
        <begin position="2"/>
        <end position="402"/>
    </location>
</feature>
<feature type="region of interest" description="4'-phosphopantetheine phosphatase" evidence="15">
    <location>
        <begin position="403"/>
        <end position="773"/>
    </location>
</feature>
<feature type="short sequence motif" description="Subfamily II EGMGR motif" evidence="15">
    <location>
        <begin position="724"/>
        <end position="728"/>
    </location>
</feature>
<feature type="binding site" evidence="1">
    <location>
        <position position="196"/>
    </location>
    <ligand>
        <name>acetyl-CoA</name>
        <dbReference type="ChEBI" id="CHEBI:57288"/>
    </ligand>
</feature>
<feature type="binding site" evidence="1">
    <location>
        <position position="199"/>
    </location>
    <ligand>
        <name>acetyl-CoA</name>
        <dbReference type="ChEBI" id="CHEBI:57288"/>
    </ligand>
</feature>
<feature type="binding site" evidence="2">
    <location>
        <position position="623"/>
    </location>
    <ligand>
        <name>Mn(2+)</name>
        <dbReference type="ChEBI" id="CHEBI:29035"/>
        <note>catalytic; for phosphatase activity</note>
    </ligand>
</feature>
<feature type="binding site" evidence="2">
    <location>
        <position position="624"/>
    </location>
    <ligand>
        <name>Mn(2+)</name>
        <dbReference type="ChEBI" id="CHEBI:29035"/>
        <note>catalytic; for phosphatase activity</note>
    </ligand>
</feature>
<feature type="binding site" evidence="2">
    <location>
        <position position="659"/>
    </location>
    <ligand>
        <name>Mn(2+)</name>
        <dbReference type="ChEBI" id="CHEBI:29035"/>
        <note>catalytic; for phosphatase activity</note>
    </ligand>
</feature>
<feature type="modified residue" description="N-acetylalanine" evidence="17">
    <location>
        <position position="2"/>
    </location>
</feature>
<feature type="modified residue" description="3'-nitrotyrosine" evidence="3">
    <location>
        <position position="320"/>
    </location>
</feature>
<feature type="modified residue" description="Phosphoserine" evidence="18">
    <location>
        <position position="393"/>
    </location>
</feature>
<feature type="modified residue" description="Phosphoserine" evidence="18">
    <location>
        <position position="404"/>
    </location>
</feature>
<feature type="modified residue" description="Phosphothreonine" evidence="3">
    <location>
        <position position="406"/>
    </location>
</feature>
<feature type="sequence variant" id="VAR_035470" description="In a colorectal cancer sample; somatic mutation; dbSNP:rs966358882." evidence="6">
    <original>E</original>
    <variation>K</variation>
    <location>
        <position position="475"/>
    </location>
</feature>
<feature type="sequence variant" id="VAR_027409" description="In dbSNP:rs7535528." evidence="7">
    <original>A</original>
    <variation>V</variation>
    <location>
        <position position="547"/>
    </location>
</feature>
<feature type="sequence variant" id="VAR_015170" description="In dbSNP:rs2494620." evidence="11">
    <original>Q</original>
    <variation>R</variation>
    <location>
        <position position="684"/>
    </location>
</feature>
<feature type="mutagenesis site" description="Does not induce acetyl-CoA production. Restores a moderate increase in acetyl-CoA production; when associated with R-211." evidence="10">
    <original>V</original>
    <variation>E</variation>
    <location>
        <position position="147"/>
    </location>
</feature>
<feature type="mutagenesis site" description="Does not induce acetyl-CoA production. Restores a moderate increase in acetyl-CoA production; when associated with E-147." evidence="10">
    <original>W</original>
    <variation>R</variation>
    <location>
        <position position="211"/>
    </location>
</feature>
<keyword id="KW-0007">Acetylation</keyword>
<keyword id="KW-0067">ATP-binding</keyword>
<keyword id="KW-0898">Cataract</keyword>
<keyword id="KW-0173">Coenzyme A biosynthesis</keyword>
<keyword id="KW-0963">Cytoplasm</keyword>
<keyword id="KW-0378">Hydrolase</keyword>
<keyword id="KW-0464">Manganese</keyword>
<keyword id="KW-0479">Metal-binding</keyword>
<keyword id="KW-0533">Nickel</keyword>
<keyword id="KW-0944">Nitration</keyword>
<keyword id="KW-0547">Nucleotide-binding</keyword>
<keyword id="KW-0597">Phosphoprotein</keyword>
<keyword id="KW-1267">Proteomics identification</keyword>
<keyword id="KW-1185">Reference proteome</keyword>
<gene>
    <name evidence="16" type="primary">PANK4</name>
</gene>
<organism>
    <name type="scientific">Homo sapiens</name>
    <name type="common">Human</name>
    <dbReference type="NCBI Taxonomy" id="9606"/>
    <lineage>
        <taxon>Eukaryota</taxon>
        <taxon>Metazoa</taxon>
        <taxon>Chordata</taxon>
        <taxon>Craniata</taxon>
        <taxon>Vertebrata</taxon>
        <taxon>Euteleostomi</taxon>
        <taxon>Mammalia</taxon>
        <taxon>Eutheria</taxon>
        <taxon>Euarchontoglires</taxon>
        <taxon>Primates</taxon>
        <taxon>Haplorrhini</taxon>
        <taxon>Catarrhini</taxon>
        <taxon>Hominidae</taxon>
        <taxon>Homo</taxon>
    </lineage>
</organism>
<accession>Q9NVE7</accession>
<accession>B9DI84</accession>
<accession>Q53EU3</accession>
<accession>Q5TA84</accession>
<accession>Q7RTX3</accession>
<accession>Q9H3X5</accession>
<reference key="1">
    <citation type="journal article" date="2004" name="Nat. Genet.">
        <title>Complete sequencing and characterization of 21,243 full-length human cDNAs.</title>
        <authorList>
            <person name="Ota T."/>
            <person name="Suzuki Y."/>
            <person name="Nishikawa T."/>
            <person name="Otsuki T."/>
            <person name="Sugiyama T."/>
            <person name="Irie R."/>
            <person name="Wakamatsu A."/>
            <person name="Hayashi K."/>
            <person name="Sato H."/>
            <person name="Nagai K."/>
            <person name="Kimura K."/>
            <person name="Makita H."/>
            <person name="Sekine M."/>
            <person name="Obayashi M."/>
            <person name="Nishi T."/>
            <person name="Shibahara T."/>
            <person name="Tanaka T."/>
            <person name="Ishii S."/>
            <person name="Yamamoto J."/>
            <person name="Saito K."/>
            <person name="Kawai Y."/>
            <person name="Isono Y."/>
            <person name="Nakamura Y."/>
            <person name="Nagahari K."/>
            <person name="Murakami K."/>
            <person name="Yasuda T."/>
            <person name="Iwayanagi T."/>
            <person name="Wagatsuma M."/>
            <person name="Shiratori A."/>
            <person name="Sudo H."/>
            <person name="Hosoiri T."/>
            <person name="Kaku Y."/>
            <person name="Kodaira H."/>
            <person name="Kondo H."/>
            <person name="Sugawara M."/>
            <person name="Takahashi M."/>
            <person name="Kanda K."/>
            <person name="Yokoi T."/>
            <person name="Furuya T."/>
            <person name="Kikkawa E."/>
            <person name="Omura Y."/>
            <person name="Abe K."/>
            <person name="Kamihara K."/>
            <person name="Katsuta N."/>
            <person name="Sato K."/>
            <person name="Tanikawa M."/>
            <person name="Yamazaki M."/>
            <person name="Ninomiya K."/>
            <person name="Ishibashi T."/>
            <person name="Yamashita H."/>
            <person name="Murakawa K."/>
            <person name="Fujimori K."/>
            <person name="Tanai H."/>
            <person name="Kimata M."/>
            <person name="Watanabe M."/>
            <person name="Hiraoka S."/>
            <person name="Chiba Y."/>
            <person name="Ishida S."/>
            <person name="Ono Y."/>
            <person name="Takiguchi S."/>
            <person name="Watanabe S."/>
            <person name="Yosida M."/>
            <person name="Hotuta T."/>
            <person name="Kusano J."/>
            <person name="Kanehori K."/>
            <person name="Takahashi-Fujii A."/>
            <person name="Hara H."/>
            <person name="Tanase T.-O."/>
            <person name="Nomura Y."/>
            <person name="Togiya S."/>
            <person name="Komai F."/>
            <person name="Hara R."/>
            <person name="Takeuchi K."/>
            <person name="Arita M."/>
            <person name="Imose N."/>
            <person name="Musashino K."/>
            <person name="Yuuki H."/>
            <person name="Oshima A."/>
            <person name="Sasaki N."/>
            <person name="Aotsuka S."/>
            <person name="Yoshikawa Y."/>
            <person name="Matsunawa H."/>
            <person name="Ichihara T."/>
            <person name="Shiohata N."/>
            <person name="Sano S."/>
            <person name="Moriya S."/>
            <person name="Momiyama H."/>
            <person name="Satoh N."/>
            <person name="Takami S."/>
            <person name="Terashima Y."/>
            <person name="Suzuki O."/>
            <person name="Nakagawa S."/>
            <person name="Senoh A."/>
            <person name="Mizoguchi H."/>
            <person name="Goto Y."/>
            <person name="Shimizu F."/>
            <person name="Wakebe H."/>
            <person name="Hishigaki H."/>
            <person name="Watanabe T."/>
            <person name="Sugiyama A."/>
            <person name="Takemoto M."/>
            <person name="Kawakami B."/>
            <person name="Yamazaki M."/>
            <person name="Watanabe K."/>
            <person name="Kumagai A."/>
            <person name="Itakura S."/>
            <person name="Fukuzumi Y."/>
            <person name="Fujimori Y."/>
            <person name="Komiyama M."/>
            <person name="Tashiro H."/>
            <person name="Tanigami A."/>
            <person name="Fujiwara T."/>
            <person name="Ono T."/>
            <person name="Yamada K."/>
            <person name="Fujii Y."/>
            <person name="Ozaki K."/>
            <person name="Hirao M."/>
            <person name="Ohmori Y."/>
            <person name="Kawabata A."/>
            <person name="Hikiji T."/>
            <person name="Kobatake N."/>
            <person name="Inagaki H."/>
            <person name="Ikema Y."/>
            <person name="Okamoto S."/>
            <person name="Okitani R."/>
            <person name="Kawakami T."/>
            <person name="Noguchi S."/>
            <person name="Itoh T."/>
            <person name="Shigeta K."/>
            <person name="Senba T."/>
            <person name="Matsumura K."/>
            <person name="Nakajima Y."/>
            <person name="Mizuno T."/>
            <person name="Morinaga M."/>
            <person name="Sasaki M."/>
            <person name="Togashi T."/>
            <person name="Oyama M."/>
            <person name="Hata H."/>
            <person name="Watanabe M."/>
            <person name="Komatsu T."/>
            <person name="Mizushima-Sugano J."/>
            <person name="Satoh T."/>
            <person name="Shirai Y."/>
            <person name="Takahashi Y."/>
            <person name="Nakagawa K."/>
            <person name="Okumura K."/>
            <person name="Nagase T."/>
            <person name="Nomura N."/>
            <person name="Kikuchi H."/>
            <person name="Masuho Y."/>
            <person name="Yamashita R."/>
            <person name="Nakai K."/>
            <person name="Yada T."/>
            <person name="Nakamura Y."/>
            <person name="Ohara O."/>
            <person name="Isogai T."/>
            <person name="Sugano S."/>
        </authorList>
    </citation>
    <scope>NUCLEOTIDE SEQUENCE [LARGE SCALE MRNA]</scope>
</reference>
<reference key="2">
    <citation type="submission" date="2005-04" db="EMBL/GenBank/DDBJ databases">
        <authorList>
            <person name="Totoki Y."/>
            <person name="Toyoda A."/>
            <person name="Takeda T."/>
            <person name="Sakaki Y."/>
            <person name="Tanaka A."/>
            <person name="Yokoyama S."/>
        </authorList>
    </citation>
    <scope>NUCLEOTIDE SEQUENCE [LARGE SCALE MRNA]</scope>
    <scope>VARIANT ARG-684</scope>
    <source>
        <tissue>Kidney</tissue>
    </source>
</reference>
<reference key="3">
    <citation type="journal article" date="2006" name="Nature">
        <title>The DNA sequence and biological annotation of human chromosome 1.</title>
        <authorList>
            <person name="Gregory S.G."/>
            <person name="Barlow K.F."/>
            <person name="McLay K.E."/>
            <person name="Kaul R."/>
            <person name="Swarbreck D."/>
            <person name="Dunham A."/>
            <person name="Scott C.E."/>
            <person name="Howe K.L."/>
            <person name="Woodfine K."/>
            <person name="Spencer C.C.A."/>
            <person name="Jones M.C."/>
            <person name="Gillson C."/>
            <person name="Searle S."/>
            <person name="Zhou Y."/>
            <person name="Kokocinski F."/>
            <person name="McDonald L."/>
            <person name="Evans R."/>
            <person name="Phillips K."/>
            <person name="Atkinson A."/>
            <person name="Cooper R."/>
            <person name="Jones C."/>
            <person name="Hall R.E."/>
            <person name="Andrews T.D."/>
            <person name="Lloyd C."/>
            <person name="Ainscough R."/>
            <person name="Almeida J.P."/>
            <person name="Ambrose K.D."/>
            <person name="Anderson F."/>
            <person name="Andrew R.W."/>
            <person name="Ashwell R.I.S."/>
            <person name="Aubin K."/>
            <person name="Babbage A.K."/>
            <person name="Bagguley C.L."/>
            <person name="Bailey J."/>
            <person name="Beasley H."/>
            <person name="Bethel G."/>
            <person name="Bird C.P."/>
            <person name="Bray-Allen S."/>
            <person name="Brown J.Y."/>
            <person name="Brown A.J."/>
            <person name="Buckley D."/>
            <person name="Burton J."/>
            <person name="Bye J."/>
            <person name="Carder C."/>
            <person name="Chapman J.C."/>
            <person name="Clark S.Y."/>
            <person name="Clarke G."/>
            <person name="Clee C."/>
            <person name="Cobley V."/>
            <person name="Collier R.E."/>
            <person name="Corby N."/>
            <person name="Coville G.J."/>
            <person name="Davies J."/>
            <person name="Deadman R."/>
            <person name="Dunn M."/>
            <person name="Earthrowl M."/>
            <person name="Ellington A.G."/>
            <person name="Errington H."/>
            <person name="Frankish A."/>
            <person name="Frankland J."/>
            <person name="French L."/>
            <person name="Garner P."/>
            <person name="Garnett J."/>
            <person name="Gay L."/>
            <person name="Ghori M.R.J."/>
            <person name="Gibson R."/>
            <person name="Gilby L.M."/>
            <person name="Gillett W."/>
            <person name="Glithero R.J."/>
            <person name="Grafham D.V."/>
            <person name="Griffiths C."/>
            <person name="Griffiths-Jones S."/>
            <person name="Grocock R."/>
            <person name="Hammond S."/>
            <person name="Harrison E.S.I."/>
            <person name="Hart E."/>
            <person name="Haugen E."/>
            <person name="Heath P.D."/>
            <person name="Holmes S."/>
            <person name="Holt K."/>
            <person name="Howden P.J."/>
            <person name="Hunt A.R."/>
            <person name="Hunt S.E."/>
            <person name="Hunter G."/>
            <person name="Isherwood J."/>
            <person name="James R."/>
            <person name="Johnson C."/>
            <person name="Johnson D."/>
            <person name="Joy A."/>
            <person name="Kay M."/>
            <person name="Kershaw J.K."/>
            <person name="Kibukawa M."/>
            <person name="Kimberley A.M."/>
            <person name="King A."/>
            <person name="Knights A.J."/>
            <person name="Lad H."/>
            <person name="Laird G."/>
            <person name="Lawlor S."/>
            <person name="Leongamornlert D.A."/>
            <person name="Lloyd D.M."/>
            <person name="Loveland J."/>
            <person name="Lovell J."/>
            <person name="Lush M.J."/>
            <person name="Lyne R."/>
            <person name="Martin S."/>
            <person name="Mashreghi-Mohammadi M."/>
            <person name="Matthews L."/>
            <person name="Matthews N.S.W."/>
            <person name="McLaren S."/>
            <person name="Milne S."/>
            <person name="Mistry S."/>
            <person name="Moore M.J.F."/>
            <person name="Nickerson T."/>
            <person name="O'Dell C.N."/>
            <person name="Oliver K."/>
            <person name="Palmeiri A."/>
            <person name="Palmer S.A."/>
            <person name="Parker A."/>
            <person name="Patel D."/>
            <person name="Pearce A.V."/>
            <person name="Peck A.I."/>
            <person name="Pelan S."/>
            <person name="Phelps K."/>
            <person name="Phillimore B.J."/>
            <person name="Plumb R."/>
            <person name="Rajan J."/>
            <person name="Raymond C."/>
            <person name="Rouse G."/>
            <person name="Saenphimmachak C."/>
            <person name="Sehra H.K."/>
            <person name="Sheridan E."/>
            <person name="Shownkeen R."/>
            <person name="Sims S."/>
            <person name="Skuce C.D."/>
            <person name="Smith M."/>
            <person name="Steward C."/>
            <person name="Subramanian S."/>
            <person name="Sycamore N."/>
            <person name="Tracey A."/>
            <person name="Tromans A."/>
            <person name="Van Helmond Z."/>
            <person name="Wall M."/>
            <person name="Wallis J.M."/>
            <person name="White S."/>
            <person name="Whitehead S.L."/>
            <person name="Wilkinson J.E."/>
            <person name="Willey D.L."/>
            <person name="Williams H."/>
            <person name="Wilming L."/>
            <person name="Wray P.W."/>
            <person name="Wu Z."/>
            <person name="Coulson A."/>
            <person name="Vaudin M."/>
            <person name="Sulston J.E."/>
            <person name="Durbin R.M."/>
            <person name="Hubbard T."/>
            <person name="Wooster R."/>
            <person name="Dunham I."/>
            <person name="Carter N.P."/>
            <person name="McVean G."/>
            <person name="Ross M.T."/>
            <person name="Harrow J."/>
            <person name="Olson M.V."/>
            <person name="Beck S."/>
            <person name="Rogers J."/>
            <person name="Bentley D.R."/>
        </authorList>
    </citation>
    <scope>NUCLEOTIDE SEQUENCE [LARGE SCALE GENOMIC DNA]</scope>
</reference>
<reference key="4">
    <citation type="submission" date="2005-07" db="EMBL/GenBank/DDBJ databases">
        <authorList>
            <person name="Mural R.J."/>
            <person name="Istrail S."/>
            <person name="Sutton G.G."/>
            <person name="Florea L."/>
            <person name="Halpern A.L."/>
            <person name="Mobarry C.M."/>
            <person name="Lippert R."/>
            <person name="Walenz B."/>
            <person name="Shatkay H."/>
            <person name="Dew I."/>
            <person name="Miller J.R."/>
            <person name="Flanigan M.J."/>
            <person name="Edwards N.J."/>
            <person name="Bolanos R."/>
            <person name="Fasulo D."/>
            <person name="Halldorsson B.V."/>
            <person name="Hannenhalli S."/>
            <person name="Turner R."/>
            <person name="Yooseph S."/>
            <person name="Lu F."/>
            <person name="Nusskern D.R."/>
            <person name="Shue B.C."/>
            <person name="Zheng X.H."/>
            <person name="Zhong F."/>
            <person name="Delcher A.L."/>
            <person name="Huson D.H."/>
            <person name="Kravitz S.A."/>
            <person name="Mouchard L."/>
            <person name="Reinert K."/>
            <person name="Remington K.A."/>
            <person name="Clark A.G."/>
            <person name="Waterman M.S."/>
            <person name="Eichler E.E."/>
            <person name="Adams M.D."/>
            <person name="Hunkapiller M.W."/>
            <person name="Myers E.W."/>
            <person name="Venter J.C."/>
        </authorList>
    </citation>
    <scope>NUCLEOTIDE SEQUENCE [LARGE SCALE GENOMIC DNA]</scope>
</reference>
<reference key="5">
    <citation type="journal article" date="2004" name="Genome Res.">
        <title>The status, quality, and expansion of the NIH full-length cDNA project: the Mammalian Gene Collection (MGC).</title>
        <authorList>
            <consortium name="The MGC Project Team"/>
        </authorList>
    </citation>
    <scope>NUCLEOTIDE SEQUENCE [LARGE SCALE MRNA]</scope>
    <source>
        <tissue>Brain</tissue>
    </source>
</reference>
<reference key="6">
    <citation type="journal article" date="2007" name="BMC Genomics">
        <title>The full-ORF clone resource of the German cDNA consortium.</title>
        <authorList>
            <person name="Bechtel S."/>
            <person name="Rosenfelder H."/>
            <person name="Duda A."/>
            <person name="Schmidt C.P."/>
            <person name="Ernst U."/>
            <person name="Wellenreuther R."/>
            <person name="Mehrle A."/>
            <person name="Schuster C."/>
            <person name="Bahr A."/>
            <person name="Bloecker H."/>
            <person name="Heubner D."/>
            <person name="Hoerlein A."/>
            <person name="Michel G."/>
            <person name="Wedler H."/>
            <person name="Koehrer K."/>
            <person name="Ottenwaelder B."/>
            <person name="Poustka A."/>
            <person name="Wiemann S."/>
            <person name="Schupp I."/>
        </authorList>
    </citation>
    <scope>NUCLEOTIDE SEQUENCE [LARGE SCALE MRNA] OF 6-773</scope>
    <scope>VARIANT VAL-547</scope>
    <source>
        <tissue>Brain</tissue>
    </source>
</reference>
<reference key="7">
    <citation type="journal article" date="2001" name="Nat. Genet.">
        <title>A novel pantothenate kinase gene (PANK2) is defective in Hallervorden-Spatz syndrome.</title>
        <authorList>
            <person name="Zhou B."/>
            <person name="Westaway S.K."/>
            <person name="Levinson B."/>
            <person name="Johnson M.A."/>
            <person name="Gitschier J."/>
            <person name="Hayflick S.J."/>
        </authorList>
    </citation>
    <scope>IDENTIFICATION</scope>
    <scope>TISSUE SPECIFICITY</scope>
</reference>
<reference key="8">
    <citation type="journal article" date="2008" name="Mol. Cell">
        <title>Kinase-selective enrichment enables quantitative phosphoproteomics of the kinome across the cell cycle.</title>
        <authorList>
            <person name="Daub H."/>
            <person name="Olsen J.V."/>
            <person name="Bairlein M."/>
            <person name="Gnad F."/>
            <person name="Oppermann F.S."/>
            <person name="Korner R."/>
            <person name="Greff Z."/>
            <person name="Keri G."/>
            <person name="Stemmann O."/>
            <person name="Mann M."/>
        </authorList>
    </citation>
    <scope>IDENTIFICATION BY MASS SPECTROMETRY [LARGE SCALE ANALYSIS]</scope>
    <source>
        <tissue>Cervix carcinoma</tissue>
    </source>
</reference>
<reference key="9">
    <citation type="journal article" date="2008" name="Proc. Natl. Acad. Sci. U.S.A.">
        <title>A quantitative atlas of mitotic phosphorylation.</title>
        <authorList>
            <person name="Dephoure N."/>
            <person name="Zhou C."/>
            <person name="Villen J."/>
            <person name="Beausoleil S.A."/>
            <person name="Bakalarski C.E."/>
            <person name="Elledge S.J."/>
            <person name="Gygi S.P."/>
        </authorList>
    </citation>
    <scope>IDENTIFICATION BY MASS SPECTROMETRY [LARGE SCALE ANALYSIS]</scope>
    <source>
        <tissue>Cervix carcinoma</tissue>
    </source>
</reference>
<reference key="10">
    <citation type="journal article" date="2009" name="Anal. Chem.">
        <title>Lys-N and trypsin cover complementary parts of the phosphoproteome in a refined SCX-based approach.</title>
        <authorList>
            <person name="Gauci S."/>
            <person name="Helbig A.O."/>
            <person name="Slijper M."/>
            <person name="Krijgsveld J."/>
            <person name="Heck A.J."/>
            <person name="Mohammed S."/>
        </authorList>
    </citation>
    <scope>ACETYLATION [LARGE SCALE ANALYSIS] AT ALA-2</scope>
    <scope>CLEAVAGE OF INITIATOR METHIONINE [LARGE SCALE ANALYSIS]</scope>
    <scope>IDENTIFICATION BY MASS SPECTROMETRY [LARGE SCALE ANALYSIS]</scope>
</reference>
<reference key="11">
    <citation type="journal article" date="2009" name="Sci. Signal.">
        <title>Quantitative phosphoproteomic analysis of T cell receptor signaling reveals system-wide modulation of protein-protein interactions.</title>
        <authorList>
            <person name="Mayya V."/>
            <person name="Lundgren D.H."/>
            <person name="Hwang S.-I."/>
            <person name="Rezaul K."/>
            <person name="Wu L."/>
            <person name="Eng J.K."/>
            <person name="Rodionov V."/>
            <person name="Han D.K."/>
        </authorList>
    </citation>
    <scope>IDENTIFICATION BY MASS SPECTROMETRY [LARGE SCALE ANALYSIS]</scope>
    <source>
        <tissue>Leukemic T-cell</tissue>
    </source>
</reference>
<reference key="12">
    <citation type="journal article" date="2010" name="Sci. Signal.">
        <title>Quantitative phosphoproteomics reveals widespread full phosphorylation site occupancy during mitosis.</title>
        <authorList>
            <person name="Olsen J.V."/>
            <person name="Vermeulen M."/>
            <person name="Santamaria A."/>
            <person name="Kumar C."/>
            <person name="Miller M.L."/>
            <person name="Jensen L.J."/>
            <person name="Gnad F."/>
            <person name="Cox J."/>
            <person name="Jensen T.S."/>
            <person name="Nigg E.A."/>
            <person name="Brunak S."/>
            <person name="Mann M."/>
        </authorList>
    </citation>
    <scope>IDENTIFICATION BY MASS SPECTROMETRY [LARGE SCALE ANALYSIS]</scope>
    <source>
        <tissue>Cervix carcinoma</tissue>
    </source>
</reference>
<reference key="13">
    <citation type="journal article" date="2011" name="BMC Syst. Biol.">
        <title>Initial characterization of the human central proteome.</title>
        <authorList>
            <person name="Burkard T.R."/>
            <person name="Planyavsky M."/>
            <person name="Kaupe I."/>
            <person name="Breitwieser F.P."/>
            <person name="Buerckstuemmer T."/>
            <person name="Bennett K.L."/>
            <person name="Superti-Furga G."/>
            <person name="Colinge J."/>
        </authorList>
    </citation>
    <scope>IDENTIFICATION BY MASS SPECTROMETRY [LARGE SCALE ANALYSIS]</scope>
</reference>
<reference key="14">
    <citation type="journal article" date="2013" name="J. Proteome Res.">
        <title>Toward a comprehensive characterization of a human cancer cell phosphoproteome.</title>
        <authorList>
            <person name="Zhou H."/>
            <person name="Di Palma S."/>
            <person name="Preisinger C."/>
            <person name="Peng M."/>
            <person name="Polat A.N."/>
            <person name="Heck A.J."/>
            <person name="Mohammed S."/>
        </authorList>
    </citation>
    <scope>PHOSPHORYLATION [LARGE SCALE ANALYSIS] AT SER-393 AND SER-404</scope>
    <scope>IDENTIFICATION BY MASS SPECTROMETRY [LARGE SCALE ANALYSIS]</scope>
    <source>
        <tissue>Cervix carcinoma</tissue>
        <tissue>Erythroleukemia</tissue>
    </source>
</reference>
<reference key="15">
    <citation type="journal article" date="2016" name="Nat. Chem. Biol.">
        <title>A family of metal-dependent phosphatases implicated in metabolite damage-control.</title>
        <authorList>
            <person name="Huang L."/>
            <person name="Khusnutdinova A."/>
            <person name="Nocek B."/>
            <person name="Brown G."/>
            <person name="Xu X."/>
            <person name="Cui H."/>
            <person name="Petit P."/>
            <person name="Flick R."/>
            <person name="Zallot R."/>
            <person name="Balmant K."/>
            <person name="Ziemak M.J."/>
            <person name="Shanklin J."/>
            <person name="de Crecy-Lagard V."/>
            <person name="Fiehn O."/>
            <person name="Gregory J.F. III"/>
            <person name="Joachimiak A."/>
            <person name="Savchenko A."/>
            <person name="Yakunin A.F."/>
            <person name="Hanson A.D."/>
        </authorList>
    </citation>
    <scope>FUNCTION</scope>
    <scope>CATALYTIC ACTIVITY</scope>
    <scope>BIOPHYSICOCHEMICAL PROPERTIES</scope>
    <scope>ACTIVITY REGULATION</scope>
    <scope>COFACTOR</scope>
</reference>
<reference key="16">
    <citation type="journal article" date="2019" name="Protein Sci.">
        <title>Human pantothenate kinase 4 is a pseudo-pantothenate kinase.</title>
        <authorList>
            <person name="Yao J."/>
            <person name="Subramanian C."/>
            <person name="Rock C.O."/>
            <person name="Jackowski S."/>
        </authorList>
    </citation>
    <scope>LACK OF PANTOTHENATE KINASE ACTIVITY</scope>
    <scope>MUTAGENESIS OF VAL-147 AND TRP-211</scope>
</reference>
<reference key="17">
    <citation type="journal article" date="2006" name="Science">
        <title>The consensus coding sequences of human breast and colorectal cancers.</title>
        <authorList>
            <person name="Sjoeblom T."/>
            <person name="Jones S."/>
            <person name="Wood L.D."/>
            <person name="Parsons D.W."/>
            <person name="Lin J."/>
            <person name="Barber T.D."/>
            <person name="Mandelker D."/>
            <person name="Leary R.J."/>
            <person name="Ptak J."/>
            <person name="Silliman N."/>
            <person name="Szabo S."/>
            <person name="Buckhaults P."/>
            <person name="Farrell C."/>
            <person name="Meeh P."/>
            <person name="Markowitz S.D."/>
            <person name="Willis J."/>
            <person name="Dawson D."/>
            <person name="Willson J.K.V."/>
            <person name="Gazdar A.F."/>
            <person name="Hartigan J."/>
            <person name="Wu L."/>
            <person name="Liu C."/>
            <person name="Parmigiani G."/>
            <person name="Park B.H."/>
            <person name="Bachman K.E."/>
            <person name="Papadopoulos N."/>
            <person name="Vogelstein B."/>
            <person name="Kinzler K.W."/>
            <person name="Velculescu V.E."/>
        </authorList>
    </citation>
    <scope>VARIANT [LARGE SCALE ANALYSIS] LYS-475</scope>
</reference>
<reference key="18">
    <citation type="journal article" date="2019" name="Hum. Mutat.">
        <title>A novel mutation of PANK4 causes autosomal dominant congenital posterior cataract.</title>
        <authorList>
            <person name="Sun M."/>
            <person name="Chen C."/>
            <person name="Hou S."/>
            <person name="Li X."/>
            <person name="Wang H."/>
            <person name="Zhou J."/>
            <person name="Chen X."/>
            <person name="Liu P."/>
            <person name="Kijlstra A."/>
            <person name="Lin S."/>
            <person name="Ye J."/>
        </authorList>
    </citation>
    <scope>INVOLVEMENT IN CTRCT49</scope>
    <scope>TISSUE SPECIFICITY</scope>
</reference>
<comment type="function">
    <text evidence="8 15">Phosphatase which shows a preference for 4'-phosphopantetheine and its oxidatively damaged forms (sulfonate or S-sulfonate), providing strong indirect evidence that the phosphatase activity pre-empts damage in the coenzyme A (CoA) pathway (PubMed:27322068). Hydrolyzing excess 4'-phosphopantetheine could constitute a directed overflow mechanism to prevent its oxidation to the S-sulfonate, sulfonate, or other forms (PubMed:27322068). Hydrolyzing 4'-phosphopantetheine sulfonate or S-sulfonate would forestall their conversion to inactive forms of CoA and acyl carrier protein (PubMed:27322068). May play a role in the physiological regulation of CoA intracellular levels (Probable).</text>
</comment>
<comment type="catalytic activity">
    <reaction evidence="8">
        <text>(R)-4'-phosphopantetheine + H2O = (R)-pantetheine + phosphate</text>
        <dbReference type="Rhea" id="RHEA:68328"/>
        <dbReference type="ChEBI" id="CHEBI:15377"/>
        <dbReference type="ChEBI" id="CHEBI:16753"/>
        <dbReference type="ChEBI" id="CHEBI:43474"/>
        <dbReference type="ChEBI" id="CHEBI:61723"/>
    </reaction>
    <physiologicalReaction direction="left-to-right" evidence="15">
        <dbReference type="Rhea" id="RHEA:68329"/>
    </physiologicalReaction>
</comment>
<comment type="catalytic activity">
    <reaction evidence="8">
        <text>(R)-4'-phosphopantetheine sulfonate + H2O = (R)-pantetheine sulfonate + phosphate</text>
        <dbReference type="Rhea" id="RHEA:68336"/>
        <dbReference type="ChEBI" id="CHEBI:15377"/>
        <dbReference type="ChEBI" id="CHEBI:43474"/>
        <dbReference type="ChEBI" id="CHEBI:177300"/>
        <dbReference type="ChEBI" id="CHEBI:177301"/>
    </reaction>
    <physiologicalReaction direction="left-to-right" evidence="15">
        <dbReference type="Rhea" id="RHEA:68337"/>
    </physiologicalReaction>
</comment>
<comment type="catalytic activity">
    <reaction evidence="8">
        <text>(R)-4'-phospho-S-sulfopantetheine + H2O = (R)-S-sulfopantetheine + phosphate</text>
        <dbReference type="Rhea" id="RHEA:68340"/>
        <dbReference type="ChEBI" id="CHEBI:15377"/>
        <dbReference type="ChEBI" id="CHEBI:43474"/>
        <dbReference type="ChEBI" id="CHEBI:177302"/>
        <dbReference type="ChEBI" id="CHEBI:177303"/>
    </reaction>
    <physiologicalReaction direction="left-to-right" evidence="15">
        <dbReference type="Rhea" id="RHEA:68341"/>
    </physiologicalReaction>
</comment>
<comment type="cofactor">
    <cofactor evidence="8">
        <name>Mn(2+)</name>
        <dbReference type="ChEBI" id="CHEBI:29035"/>
    </cofactor>
    <cofactor evidence="8">
        <name>Ni(2+)</name>
        <dbReference type="ChEBI" id="CHEBI:49786"/>
    </cofactor>
    <text evidence="8">Phosphatase activity is strongly promoted by several divalent cation ions but it is suggested s that Mn(2+) and possibly Ni(2+) represent biologically relevant metal ion cofactors for damage-control phosphatases.</text>
</comment>
<comment type="activity regulation">
    <text evidence="8">Activity is strongly promoted by Co(2+), Ni(2+), Mg(2+) and Mn(2+) (PubMed:27322068). Activity is inhibited by EDTA (PubMed:27322068).</text>
</comment>
<comment type="biophysicochemical properties">
    <kinetics>
        <KM evidence="8">1920 uM for p-nitrophenylphosphate</KM>
        <KM evidence="8">150 uM for D-pantetheine 4'-phosphate</KM>
        <KM evidence="8">3.9 uM for D-pantetheine 4'-phosphate-sulfonate</KM>
        <text evidence="8">kcat is 0.17 sec(-1) with p-nitrophenylphosphate as substrate. kcat is 0.71 sec(-1) with D-pantetheine 4'-phosphate as substrate. kcat is 0.09 sec(-1) with D-pantetheine 4'-phosphate-sulfonate as substrate.</text>
    </kinetics>
</comment>
<comment type="subunit">
    <text evidence="4">Homodimer. Interacts with PKM.</text>
</comment>
<comment type="subcellular location">
    <subcellularLocation>
        <location evidence="4">Cytoplasm</location>
    </subcellularLocation>
</comment>
<comment type="tissue specificity">
    <text evidence="5 9">Widely expressed with high expression in the muscle (PubMed:11479594). Expressed in the retina and lens epithelium, mainly in ganglion cell layer, outer plexiform layer and retinal pigment layer (at protein level) (PubMed:30585370).</text>
</comment>
<comment type="domain">
    <text evidence="15">Subfamily II proteins have an EGMGR motif about 50 residues from the C-terminus (Probable). This motif lies near the metal-binding residues in the putative substrate-binding cleft 2 (Probable). Subfamily II proteins occur only in eukaryotes, in two forms: as a stand-alone unit in plants, and as a C-terminal domain of pantothenate kinases in plants, animals, and chytrid fungi (Probable).</text>
</comment>
<comment type="disease" evidence="9">
    <disease id="DI-06237">
        <name>Cataract 49</name>
        <acronym>CTRCT49</acronym>
        <description>A form of cataract, an opacification of the crystalline lens of the eye that frequently results in visual impairment or blindness. Opacities vary in morphology, are often confined to a portion of the lens, and may be static or progressive. In general, the more posteriorly located and dense an opacity, the greater the impact on visual function. CTRCT49 is an autosomal dominant form characterized by congenital cataract located in the posterior region of the lens. Visual impairment has onset in early childhood.</description>
        <dbReference type="MIM" id="619593"/>
    </disease>
    <text>The disease may be caused by variants affecting the gene represented in this entry.</text>
</comment>
<comment type="similarity">
    <text evidence="14">In the N-terminal section; belongs to the type II pantothenate kinase family.</text>
</comment>
<comment type="similarity">
    <text evidence="14">In the C-terminal section; belongs to the damage-control phosphatase family. Phosphopantetheine phosphatase II subfamily.</text>
</comment>
<comment type="caution">
    <text evidence="10">Despite belonging to the type II pantothenate kinase family, the pantothenate kinase domain contains a Val residue at position 147 and a Trp residue at position 211 instead of the two conserved active site residues, Glu and Arg. Lacks pantothenate kinase activity.</text>
</comment>
<dbReference type="EC" id="3.1.3.-" evidence="8"/>
<dbReference type="EMBL" id="AK001644">
    <property type="protein sequence ID" value="BAA91805.1"/>
    <property type="molecule type" value="mRNA"/>
</dbReference>
<dbReference type="EMBL" id="AK223546">
    <property type="protein sequence ID" value="BAD97266.1"/>
    <property type="molecule type" value="mRNA"/>
</dbReference>
<dbReference type="EMBL" id="AL139246">
    <property type="status" value="NOT_ANNOTATED_CDS"/>
    <property type="molecule type" value="Genomic_DNA"/>
</dbReference>
<dbReference type="EMBL" id="CH471183">
    <property type="protein sequence ID" value="EAW56097.1"/>
    <property type="molecule type" value="Genomic_DNA"/>
</dbReference>
<dbReference type="EMBL" id="BC043496">
    <property type="protein sequence ID" value="AAH43496.1"/>
    <property type="molecule type" value="mRNA"/>
</dbReference>
<dbReference type="EMBL" id="AL442072">
    <property type="protein sequence ID" value="CAC09438.1"/>
    <property type="molecule type" value="mRNA"/>
</dbReference>
<dbReference type="EMBL" id="BK000012">
    <property type="protein sequence ID" value="DAA00006.1"/>
    <property type="molecule type" value="Genomic_DNA"/>
</dbReference>
<dbReference type="CCDS" id="CCDS42.3"/>
<dbReference type="RefSeq" id="NP_060686.3">
    <property type="nucleotide sequence ID" value="NM_018216.4"/>
</dbReference>
<dbReference type="SMR" id="Q9NVE7"/>
<dbReference type="BioGRID" id="120524">
    <property type="interactions" value="85"/>
</dbReference>
<dbReference type="FunCoup" id="Q9NVE7">
    <property type="interactions" value="2293"/>
</dbReference>
<dbReference type="IntAct" id="Q9NVE7">
    <property type="interactions" value="31"/>
</dbReference>
<dbReference type="MINT" id="Q9NVE7"/>
<dbReference type="STRING" id="9606.ENSP00000498888"/>
<dbReference type="iPTMnet" id="Q9NVE7"/>
<dbReference type="MetOSite" id="Q9NVE7"/>
<dbReference type="PhosphoSitePlus" id="Q9NVE7"/>
<dbReference type="SwissPalm" id="Q9NVE7"/>
<dbReference type="BioMuta" id="PANK4"/>
<dbReference type="DMDM" id="27805669"/>
<dbReference type="jPOST" id="Q9NVE7"/>
<dbReference type="MassIVE" id="Q9NVE7"/>
<dbReference type="PaxDb" id="9606-ENSP00000367727"/>
<dbReference type="PeptideAtlas" id="Q9NVE7"/>
<dbReference type="ProteomicsDB" id="82788"/>
<dbReference type="Pumba" id="Q9NVE7"/>
<dbReference type="Antibodypedia" id="1627">
    <property type="antibodies" value="142 antibodies from 21 providers"/>
</dbReference>
<dbReference type="DNASU" id="55229"/>
<dbReference type="Ensembl" id="ENST00000378466.9">
    <property type="protein sequence ID" value="ENSP00000367727.5"/>
    <property type="gene ID" value="ENSG00000157881.16"/>
</dbReference>
<dbReference type="Ensembl" id="ENST00000615291.3">
    <property type="protein sequence ID" value="ENSP00000478189.1"/>
    <property type="gene ID" value="ENSG00000273494.3"/>
</dbReference>
<dbReference type="GeneID" id="55229"/>
<dbReference type="KEGG" id="hsa:55229"/>
<dbReference type="MANE-Select" id="ENST00000378466.9">
    <property type="protein sequence ID" value="ENSP00000367727.5"/>
    <property type="RefSeq nucleotide sequence ID" value="NM_018216.4"/>
    <property type="RefSeq protein sequence ID" value="NP_060686.3"/>
</dbReference>
<dbReference type="UCSC" id="uc001ajm.2">
    <property type="organism name" value="human"/>
</dbReference>
<dbReference type="AGR" id="HGNC:19366"/>
<dbReference type="CTD" id="55229"/>
<dbReference type="DisGeNET" id="55229"/>
<dbReference type="GeneCards" id="PANK4"/>
<dbReference type="GeneReviews" id="PANK4"/>
<dbReference type="HGNC" id="HGNC:19366">
    <property type="gene designation" value="PANK4"/>
</dbReference>
<dbReference type="HPA" id="ENSG00000157881">
    <property type="expression patterns" value="Low tissue specificity"/>
</dbReference>
<dbReference type="MalaCards" id="PANK4"/>
<dbReference type="MIM" id="606162">
    <property type="type" value="gene"/>
</dbReference>
<dbReference type="MIM" id="619593">
    <property type="type" value="phenotype"/>
</dbReference>
<dbReference type="neXtProt" id="NX_Q9NVE7"/>
<dbReference type="OpenTargets" id="ENSG00000157881"/>
<dbReference type="Orphanet" id="98993">
    <property type="disease" value="Early-onset posterior polar cataract"/>
</dbReference>
<dbReference type="PharmGKB" id="PA134887214"/>
<dbReference type="VEuPathDB" id="HostDB:ENSG00000157881"/>
<dbReference type="eggNOG" id="KOG2201">
    <property type="taxonomic scope" value="Eukaryota"/>
</dbReference>
<dbReference type="eggNOG" id="KOG4584">
    <property type="taxonomic scope" value="Eukaryota"/>
</dbReference>
<dbReference type="GeneTree" id="ENSGT00940000158896"/>
<dbReference type="HOGENOM" id="CLU_012496_1_1_1"/>
<dbReference type="InParanoid" id="Q9NVE7"/>
<dbReference type="OMA" id="LNEYKYW"/>
<dbReference type="OrthoDB" id="498611at2759"/>
<dbReference type="PAN-GO" id="Q9NVE7">
    <property type="GO annotations" value="3 GO annotations based on evolutionary models"/>
</dbReference>
<dbReference type="PhylomeDB" id="Q9NVE7"/>
<dbReference type="TreeFam" id="TF342917"/>
<dbReference type="BioCyc" id="MetaCyc:HS08249-MONOMER"/>
<dbReference type="PathwayCommons" id="Q9NVE7"/>
<dbReference type="Reactome" id="R-HSA-199220">
    <property type="pathway name" value="Vitamin B5 (pantothenate) metabolism"/>
</dbReference>
<dbReference type="SignaLink" id="Q9NVE7"/>
<dbReference type="BioGRID-ORCS" id="55229">
    <property type="hits" value="14 hits in 1155 CRISPR screens"/>
</dbReference>
<dbReference type="ChiTaRS" id="PANK4">
    <property type="organism name" value="human"/>
</dbReference>
<dbReference type="GeneWiki" id="PANK4"/>
<dbReference type="GenomeRNAi" id="55229"/>
<dbReference type="Pharos" id="Q9NVE7">
    <property type="development level" value="Tbio"/>
</dbReference>
<dbReference type="PRO" id="PR:Q9NVE7"/>
<dbReference type="Proteomes" id="UP000005640">
    <property type="component" value="Chromosome 1"/>
</dbReference>
<dbReference type="RNAct" id="Q9NVE7">
    <property type="molecule type" value="protein"/>
</dbReference>
<dbReference type="Bgee" id="ENSG00000157881">
    <property type="expression patterns" value="Expressed in apex of heart and 94 other cell types or tissues"/>
</dbReference>
<dbReference type="ExpressionAtlas" id="Q9NVE7">
    <property type="expression patterns" value="baseline and differential"/>
</dbReference>
<dbReference type="GO" id="GO:0005829">
    <property type="term" value="C:cytosol"/>
    <property type="evidence" value="ECO:0000318"/>
    <property type="project" value="GO_Central"/>
</dbReference>
<dbReference type="GO" id="GO:0005634">
    <property type="term" value="C:nucleus"/>
    <property type="evidence" value="ECO:0000318"/>
    <property type="project" value="GO_Central"/>
</dbReference>
<dbReference type="GO" id="GO:0005524">
    <property type="term" value="F:ATP binding"/>
    <property type="evidence" value="ECO:0007669"/>
    <property type="project" value="UniProtKB-KW"/>
</dbReference>
<dbReference type="GO" id="GO:0046872">
    <property type="term" value="F:metal ion binding"/>
    <property type="evidence" value="ECO:0007669"/>
    <property type="project" value="UniProtKB-KW"/>
</dbReference>
<dbReference type="GO" id="GO:0016791">
    <property type="term" value="F:phosphatase activity"/>
    <property type="evidence" value="ECO:0000269"/>
    <property type="project" value="Reactome"/>
</dbReference>
<dbReference type="GO" id="GO:0015937">
    <property type="term" value="P:coenzyme A biosynthetic process"/>
    <property type="evidence" value="ECO:0000318"/>
    <property type="project" value="GO_Central"/>
</dbReference>
<dbReference type="GO" id="GO:0015939">
    <property type="term" value="P:pantothenate metabolic process"/>
    <property type="evidence" value="ECO:0000304"/>
    <property type="project" value="Reactome"/>
</dbReference>
<dbReference type="CDD" id="cd24123">
    <property type="entry name" value="ASKHA_NBD_PanK-II_Pank4"/>
    <property type="match status" value="1"/>
</dbReference>
<dbReference type="FunFam" id="1.20.1700.10:FF:000001">
    <property type="entry name" value="Pantothenate kinase 4"/>
    <property type="match status" value="1"/>
</dbReference>
<dbReference type="FunFam" id="3.30.420.40:FF:000067">
    <property type="entry name" value="Pantothenate kinase 4"/>
    <property type="match status" value="1"/>
</dbReference>
<dbReference type="FunFam" id="3.30.420.510:FF:000002">
    <property type="entry name" value="Pantothenate kinase 4"/>
    <property type="match status" value="1"/>
</dbReference>
<dbReference type="FunFam" id="3.40.50.10880:FF:000001">
    <property type="entry name" value="Pantothenate kinase 4"/>
    <property type="match status" value="1"/>
</dbReference>
<dbReference type="Gene3D" id="3.30.420.40">
    <property type="match status" value="1"/>
</dbReference>
<dbReference type="Gene3D" id="3.30.420.510">
    <property type="match status" value="1"/>
</dbReference>
<dbReference type="Gene3D" id="1.20.1700.10">
    <property type="entry name" value="AF1104-like"/>
    <property type="match status" value="1"/>
</dbReference>
<dbReference type="Gene3D" id="3.40.50.10880">
    <property type="entry name" value="Uncharacterised protein PF01937, DUF89, domain 3"/>
    <property type="match status" value="1"/>
</dbReference>
<dbReference type="InterPro" id="IPR036075">
    <property type="entry name" value="ARMT-1-like_metal-bd_sf"/>
</dbReference>
<dbReference type="InterPro" id="IPR002791">
    <property type="entry name" value="ARMT1-like_metal-bd"/>
</dbReference>
<dbReference type="InterPro" id="IPR035073">
    <property type="entry name" value="At2g17340_3_helix_bundle"/>
</dbReference>
<dbReference type="InterPro" id="IPR043129">
    <property type="entry name" value="ATPase_NBD"/>
</dbReference>
<dbReference type="InterPro" id="IPR015844">
    <property type="entry name" value="PanK_long"/>
</dbReference>
<dbReference type="InterPro" id="IPR004567">
    <property type="entry name" value="Type_II_PanK"/>
</dbReference>
<dbReference type="NCBIfam" id="TIGR00555">
    <property type="entry name" value="panK_eukar"/>
    <property type="match status" value="1"/>
</dbReference>
<dbReference type="PANTHER" id="PTHR12280:SF20">
    <property type="entry name" value="4'-PHOSPHOPANTETHEINE PHOSPHATASE"/>
    <property type="match status" value="1"/>
</dbReference>
<dbReference type="PANTHER" id="PTHR12280">
    <property type="entry name" value="PANTOTHENATE KINASE"/>
    <property type="match status" value="1"/>
</dbReference>
<dbReference type="Pfam" id="PF01937">
    <property type="entry name" value="ARMT1-like_dom"/>
    <property type="match status" value="1"/>
</dbReference>
<dbReference type="Pfam" id="PF03630">
    <property type="entry name" value="Fumble"/>
    <property type="match status" value="1"/>
</dbReference>
<dbReference type="PIRSF" id="PIRSF036939">
    <property type="entry name" value="PanK_long"/>
    <property type="match status" value="1"/>
</dbReference>
<dbReference type="SUPFAM" id="SSF53067">
    <property type="entry name" value="Actin-like ATPase domain"/>
    <property type="match status" value="2"/>
</dbReference>
<dbReference type="SUPFAM" id="SSF111321">
    <property type="entry name" value="AF1104-like"/>
    <property type="match status" value="1"/>
</dbReference>
<protein>
    <recommendedName>
        <fullName evidence="12">4'-phosphopantetheine phosphatase</fullName>
        <ecNumber evidence="8">3.1.3.-</ecNumber>
    </recommendedName>
    <alternativeName>
        <fullName evidence="13">Inactive pantothenic acid kinase 4</fullName>
        <shortName>hPanK4</shortName>
    </alternativeName>
</protein>
<name>PANK4_HUMAN</name>